<protein>
    <recommendedName>
        <fullName evidence="1">Fatty acid oxidation complex subunit alpha</fullName>
    </recommendedName>
    <domain>
        <recommendedName>
            <fullName evidence="1">Enoyl-CoA hydratase/3-hydroxybutyryl-CoA epimerase</fullName>
            <ecNumber evidence="1">4.2.1.17</ecNumber>
            <ecNumber evidence="1">5.1.2.3</ecNumber>
        </recommendedName>
    </domain>
    <domain>
        <recommendedName>
            <fullName evidence="1">3-hydroxyacyl-CoA dehydrogenase</fullName>
            <ecNumber evidence="1">1.1.1.35</ecNumber>
        </recommendedName>
    </domain>
</protein>
<accession>A8ADP2</accession>
<dbReference type="EC" id="4.2.1.17" evidence="1"/>
<dbReference type="EC" id="5.1.2.3" evidence="1"/>
<dbReference type="EC" id="1.1.1.35" evidence="1"/>
<dbReference type="EMBL" id="CP000822">
    <property type="protein sequence ID" value="ABV11605.1"/>
    <property type="molecule type" value="Genomic_DNA"/>
</dbReference>
<dbReference type="RefSeq" id="WP_012131432.1">
    <property type="nucleotide sequence ID" value="NC_009792.1"/>
</dbReference>
<dbReference type="SMR" id="A8ADP2"/>
<dbReference type="STRING" id="290338.CKO_00449"/>
<dbReference type="GeneID" id="45134699"/>
<dbReference type="KEGG" id="cko:CKO_00449"/>
<dbReference type="HOGENOM" id="CLU_009834_16_3_6"/>
<dbReference type="OrthoDB" id="5389341at2"/>
<dbReference type="UniPathway" id="UPA00659"/>
<dbReference type="Proteomes" id="UP000008148">
    <property type="component" value="Chromosome"/>
</dbReference>
<dbReference type="GO" id="GO:0005737">
    <property type="term" value="C:cytoplasm"/>
    <property type="evidence" value="ECO:0007669"/>
    <property type="project" value="UniProtKB-SubCell"/>
</dbReference>
<dbReference type="GO" id="GO:0008692">
    <property type="term" value="F:3-hydroxybutyryl-CoA epimerase activity"/>
    <property type="evidence" value="ECO:0007669"/>
    <property type="project" value="UniProtKB-UniRule"/>
</dbReference>
<dbReference type="GO" id="GO:0004300">
    <property type="term" value="F:enoyl-CoA hydratase activity"/>
    <property type="evidence" value="ECO:0007669"/>
    <property type="project" value="UniProtKB-UniRule"/>
</dbReference>
<dbReference type="GO" id="GO:0016509">
    <property type="term" value="F:long-chain-3-hydroxyacyl-CoA dehydrogenase activity"/>
    <property type="evidence" value="ECO:0007669"/>
    <property type="project" value="TreeGrafter"/>
</dbReference>
<dbReference type="GO" id="GO:0070403">
    <property type="term" value="F:NAD+ binding"/>
    <property type="evidence" value="ECO:0007669"/>
    <property type="project" value="InterPro"/>
</dbReference>
<dbReference type="GO" id="GO:0006635">
    <property type="term" value="P:fatty acid beta-oxidation"/>
    <property type="evidence" value="ECO:0007669"/>
    <property type="project" value="UniProtKB-UniRule"/>
</dbReference>
<dbReference type="CDD" id="cd06558">
    <property type="entry name" value="crotonase-like"/>
    <property type="match status" value="1"/>
</dbReference>
<dbReference type="FunFam" id="1.10.1040.50:FF:000003">
    <property type="entry name" value="Fatty acid oxidation complex subunit alpha"/>
    <property type="match status" value="1"/>
</dbReference>
<dbReference type="FunFam" id="3.90.226.10:FF:000011">
    <property type="entry name" value="Fatty acid oxidation complex subunit alpha"/>
    <property type="match status" value="1"/>
</dbReference>
<dbReference type="FunFam" id="3.40.50.720:FF:000009">
    <property type="entry name" value="Fatty oxidation complex, alpha subunit"/>
    <property type="match status" value="1"/>
</dbReference>
<dbReference type="Gene3D" id="1.10.1040.50">
    <property type="match status" value="1"/>
</dbReference>
<dbReference type="Gene3D" id="3.90.226.10">
    <property type="entry name" value="2-enoyl-CoA Hydratase, Chain A, domain 1"/>
    <property type="match status" value="1"/>
</dbReference>
<dbReference type="Gene3D" id="3.40.50.720">
    <property type="entry name" value="NAD(P)-binding Rossmann-like Domain"/>
    <property type="match status" value="1"/>
</dbReference>
<dbReference type="HAMAP" id="MF_01617">
    <property type="entry name" value="FadJ"/>
    <property type="match status" value="1"/>
</dbReference>
<dbReference type="InterPro" id="IPR006180">
    <property type="entry name" value="3-OHacyl-CoA_DH_CS"/>
</dbReference>
<dbReference type="InterPro" id="IPR006176">
    <property type="entry name" value="3-OHacyl-CoA_DH_NAD-bd"/>
</dbReference>
<dbReference type="InterPro" id="IPR006108">
    <property type="entry name" value="3HC_DH_C"/>
</dbReference>
<dbReference type="InterPro" id="IPR008927">
    <property type="entry name" value="6-PGluconate_DH-like_C_sf"/>
</dbReference>
<dbReference type="InterPro" id="IPR029045">
    <property type="entry name" value="ClpP/crotonase-like_dom_sf"/>
</dbReference>
<dbReference type="InterPro" id="IPR001753">
    <property type="entry name" value="Enoyl-CoA_hydra/iso"/>
</dbReference>
<dbReference type="InterPro" id="IPR050136">
    <property type="entry name" value="FA_oxidation_alpha_subunit"/>
</dbReference>
<dbReference type="InterPro" id="IPR012802">
    <property type="entry name" value="FadJ"/>
</dbReference>
<dbReference type="InterPro" id="IPR036291">
    <property type="entry name" value="NAD(P)-bd_dom_sf"/>
</dbReference>
<dbReference type="NCBIfam" id="TIGR02440">
    <property type="entry name" value="FadJ"/>
    <property type="match status" value="1"/>
</dbReference>
<dbReference type="NCBIfam" id="NF008363">
    <property type="entry name" value="PRK11154.1"/>
    <property type="match status" value="1"/>
</dbReference>
<dbReference type="PANTHER" id="PTHR43612">
    <property type="entry name" value="TRIFUNCTIONAL ENZYME SUBUNIT ALPHA"/>
    <property type="match status" value="1"/>
</dbReference>
<dbReference type="PANTHER" id="PTHR43612:SF3">
    <property type="entry name" value="TRIFUNCTIONAL ENZYME SUBUNIT ALPHA, MITOCHONDRIAL"/>
    <property type="match status" value="1"/>
</dbReference>
<dbReference type="Pfam" id="PF00725">
    <property type="entry name" value="3HCDH"/>
    <property type="match status" value="2"/>
</dbReference>
<dbReference type="Pfam" id="PF02737">
    <property type="entry name" value="3HCDH_N"/>
    <property type="match status" value="1"/>
</dbReference>
<dbReference type="Pfam" id="PF00378">
    <property type="entry name" value="ECH_1"/>
    <property type="match status" value="1"/>
</dbReference>
<dbReference type="SUPFAM" id="SSF48179">
    <property type="entry name" value="6-phosphogluconate dehydrogenase C-terminal domain-like"/>
    <property type="match status" value="2"/>
</dbReference>
<dbReference type="SUPFAM" id="SSF52096">
    <property type="entry name" value="ClpP/crotonase"/>
    <property type="match status" value="1"/>
</dbReference>
<dbReference type="SUPFAM" id="SSF51735">
    <property type="entry name" value="NAD(P)-binding Rossmann-fold domains"/>
    <property type="match status" value="1"/>
</dbReference>
<dbReference type="PROSITE" id="PS00067">
    <property type="entry name" value="3HCDH"/>
    <property type="match status" value="1"/>
</dbReference>
<sequence length="715" mass="77162">MDMTSAFTLNVRLDNVAVVSIDVPGEKMNTLKAEFATQVRAILKQIRENKALRGVVFISAKPDNFIAGADINMIGNCKSAQEAETLARQGQQIMAEIQALSVPVVAAIHGACLGGGLEMALACHRRICTDDAKTVLGLPEVQLGLLPGSGGTQRLPRLVGVSTALDMILTGKQLRPKQALRVGLVDEVVPHAILLEAAVELAIKGRSAQRNLPVRERILAGPLGRTLLFRMVSKKTGQKTQGNYPATERILEVIETGLAQGSSSGYDAEARAFGELAMTPQSQALRNIFFASTEVKKDPGSDAQPGPLASVGVLGGGLMGGGIAYVTACKGGLSVRIKDINAKGINHALKYSWDQLETKVRRRHIKAGERDKQLALISGSTDYRGFSHRDLVIEAVFEDLALKQQMVAEVEQNCAPHTIFASNTSSLPIGDIAANAARPEQVIGLHFFSPVEKMPLVEVIPHATTSAQTIATTVKLAKKQGKTPIVVSDKAGFYVNRILAPYINEAIRLLTEGERVEAIDAALVKFGFPVGPIQLLDEVGIDTGTKIIPVLEAAYGERFSAPANVVASILNDDRKGRKNGRGFYLYGVKGRKSKKQVDPAIYRLIGTQGQSRLSAQQMAERCVMLMLNEAARCFDEKVIRSARDGDIGAVFGIGFPPFLGGPFRYMDTLGAGEVVAVLQRLATQYGDRFTPCERLLRMAERGERFWNSGETDLKE</sequence>
<proteinExistence type="inferred from homology"/>
<organism>
    <name type="scientific">Citrobacter koseri (strain ATCC BAA-895 / CDC 4225-83 / SGSC4696)</name>
    <dbReference type="NCBI Taxonomy" id="290338"/>
    <lineage>
        <taxon>Bacteria</taxon>
        <taxon>Pseudomonadati</taxon>
        <taxon>Pseudomonadota</taxon>
        <taxon>Gammaproteobacteria</taxon>
        <taxon>Enterobacterales</taxon>
        <taxon>Enterobacteriaceae</taxon>
        <taxon>Citrobacter</taxon>
    </lineage>
</organism>
<keyword id="KW-0963">Cytoplasm</keyword>
<keyword id="KW-0276">Fatty acid metabolism</keyword>
<keyword id="KW-0413">Isomerase</keyword>
<keyword id="KW-0442">Lipid degradation</keyword>
<keyword id="KW-0443">Lipid metabolism</keyword>
<keyword id="KW-0456">Lyase</keyword>
<keyword id="KW-0511">Multifunctional enzyme</keyword>
<keyword id="KW-0520">NAD</keyword>
<keyword id="KW-0560">Oxidoreductase</keyword>
<keyword id="KW-1185">Reference proteome</keyword>
<name>FADJ_CITK8</name>
<reference key="1">
    <citation type="submission" date="2007-08" db="EMBL/GenBank/DDBJ databases">
        <authorList>
            <consortium name="The Citrobacter koseri Genome Sequencing Project"/>
            <person name="McClelland M."/>
            <person name="Sanderson E.K."/>
            <person name="Porwollik S."/>
            <person name="Spieth J."/>
            <person name="Clifton W.S."/>
            <person name="Latreille P."/>
            <person name="Courtney L."/>
            <person name="Wang C."/>
            <person name="Pepin K."/>
            <person name="Bhonagiri V."/>
            <person name="Nash W."/>
            <person name="Johnson M."/>
            <person name="Thiruvilangam P."/>
            <person name="Wilson R."/>
        </authorList>
    </citation>
    <scope>NUCLEOTIDE SEQUENCE [LARGE SCALE GENOMIC DNA]</scope>
    <source>
        <strain>ATCC BAA-895 / CDC 4225-83 / SGSC4696</strain>
    </source>
</reference>
<feature type="chain" id="PRO_1000069482" description="Fatty acid oxidation complex subunit alpha">
    <location>
        <begin position="1"/>
        <end position="715"/>
    </location>
</feature>
<feature type="region of interest" description="Enoyl-CoA hydratase" evidence="1">
    <location>
        <begin position="1"/>
        <end position="190"/>
    </location>
</feature>
<feature type="region of interest" description="3-hydroxyacyl-CoA dehydrogenase" evidence="1">
    <location>
        <begin position="306"/>
        <end position="715"/>
    </location>
</feature>
<feature type="site" description="Important for catalytic activity" evidence="1">
    <location>
        <position position="118"/>
    </location>
</feature>
<feature type="site" description="Important for catalytic activity" evidence="1">
    <location>
        <position position="140"/>
    </location>
</feature>
<comment type="function">
    <text evidence="1">Catalyzes the formation of a hydroxyacyl-CoA by addition of water on enoyl-CoA. Also exhibits 3-hydroxyacyl-CoA epimerase and 3-hydroxyacyl-CoA dehydrogenase activities.</text>
</comment>
<comment type="catalytic activity">
    <reaction evidence="1">
        <text>a (3S)-3-hydroxyacyl-CoA = a (2E)-enoyl-CoA + H2O</text>
        <dbReference type="Rhea" id="RHEA:16105"/>
        <dbReference type="ChEBI" id="CHEBI:15377"/>
        <dbReference type="ChEBI" id="CHEBI:57318"/>
        <dbReference type="ChEBI" id="CHEBI:58856"/>
        <dbReference type="EC" id="4.2.1.17"/>
    </reaction>
</comment>
<comment type="catalytic activity">
    <reaction evidence="1">
        <text>a 4-saturated-(3S)-3-hydroxyacyl-CoA = a (3E)-enoyl-CoA + H2O</text>
        <dbReference type="Rhea" id="RHEA:20724"/>
        <dbReference type="ChEBI" id="CHEBI:15377"/>
        <dbReference type="ChEBI" id="CHEBI:58521"/>
        <dbReference type="ChEBI" id="CHEBI:137480"/>
        <dbReference type="EC" id="4.2.1.17"/>
    </reaction>
</comment>
<comment type="catalytic activity">
    <reaction evidence="1">
        <text>a (3S)-3-hydroxyacyl-CoA + NAD(+) = a 3-oxoacyl-CoA + NADH + H(+)</text>
        <dbReference type="Rhea" id="RHEA:22432"/>
        <dbReference type="ChEBI" id="CHEBI:15378"/>
        <dbReference type="ChEBI" id="CHEBI:57318"/>
        <dbReference type="ChEBI" id="CHEBI:57540"/>
        <dbReference type="ChEBI" id="CHEBI:57945"/>
        <dbReference type="ChEBI" id="CHEBI:90726"/>
        <dbReference type="EC" id="1.1.1.35"/>
    </reaction>
</comment>
<comment type="catalytic activity">
    <reaction evidence="1">
        <text>(3S)-3-hydroxybutanoyl-CoA = (3R)-3-hydroxybutanoyl-CoA</text>
        <dbReference type="Rhea" id="RHEA:21760"/>
        <dbReference type="ChEBI" id="CHEBI:57315"/>
        <dbReference type="ChEBI" id="CHEBI:57316"/>
        <dbReference type="EC" id="5.1.2.3"/>
    </reaction>
</comment>
<comment type="pathway">
    <text evidence="1">Lipid metabolism; fatty acid beta-oxidation.</text>
</comment>
<comment type="subunit">
    <text evidence="1">Heterotetramer of two alpha chains (FadJ) and two beta chains (FadI).</text>
</comment>
<comment type="subcellular location">
    <subcellularLocation>
        <location evidence="1">Cytoplasm</location>
    </subcellularLocation>
</comment>
<comment type="similarity">
    <text evidence="1">In the N-terminal section; belongs to the enoyl-CoA hydratase/isomerase family.</text>
</comment>
<comment type="similarity">
    <text evidence="1">In the central section; belongs to the 3-hydroxyacyl-CoA dehydrogenase family.</text>
</comment>
<evidence type="ECO:0000255" key="1">
    <source>
        <dbReference type="HAMAP-Rule" id="MF_01617"/>
    </source>
</evidence>
<gene>
    <name evidence="1" type="primary">fadJ</name>
    <name type="ordered locus">CKO_00449</name>
</gene>